<gene>
    <name type="ordered locus">MJ0358</name>
</gene>
<feature type="chain" id="PRO_0000106829" description="Uncharacterized protein MJ0358">
    <location>
        <begin position="1"/>
        <end position="128"/>
    </location>
</feature>
<accession>Q57804</accession>
<sequence>MTFDLLKELKRIYKHFENIDLEQFERDLIECGFGKIKPGPLATDEVLTEEDIAKYREIIMKSQTCNVNTHNQIVIKINLKEINADNKMYCKFRKGYKFKEDIKVGEESSYIITLQQDSLHICNNYEVA</sequence>
<reference key="1">
    <citation type="journal article" date="1996" name="Science">
        <title>Complete genome sequence of the methanogenic archaeon, Methanococcus jannaschii.</title>
        <authorList>
            <person name="Bult C.J."/>
            <person name="White O."/>
            <person name="Olsen G.J."/>
            <person name="Zhou L."/>
            <person name="Fleischmann R.D."/>
            <person name="Sutton G.G."/>
            <person name="Blake J.A."/>
            <person name="FitzGerald L.M."/>
            <person name="Clayton R.A."/>
            <person name="Gocayne J.D."/>
            <person name="Kerlavage A.R."/>
            <person name="Dougherty B.A."/>
            <person name="Tomb J.-F."/>
            <person name="Adams M.D."/>
            <person name="Reich C.I."/>
            <person name="Overbeek R."/>
            <person name="Kirkness E.F."/>
            <person name="Weinstock K.G."/>
            <person name="Merrick J.M."/>
            <person name="Glodek A."/>
            <person name="Scott J.L."/>
            <person name="Geoghagen N.S.M."/>
            <person name="Weidman J.F."/>
            <person name="Fuhrmann J.L."/>
            <person name="Nguyen D."/>
            <person name="Utterback T.R."/>
            <person name="Kelley J.M."/>
            <person name="Peterson J.D."/>
            <person name="Sadow P.W."/>
            <person name="Hanna M.C."/>
            <person name="Cotton M.D."/>
            <person name="Roberts K.M."/>
            <person name="Hurst M.A."/>
            <person name="Kaine B.P."/>
            <person name="Borodovsky M."/>
            <person name="Klenk H.-P."/>
            <person name="Fraser C.M."/>
            <person name="Smith H.O."/>
            <person name="Woese C.R."/>
            <person name="Venter J.C."/>
        </authorList>
    </citation>
    <scope>NUCLEOTIDE SEQUENCE [LARGE SCALE GENOMIC DNA]</scope>
    <source>
        <strain>ATCC 43067 / DSM 2661 / JAL-1 / JCM 10045 / NBRC 100440</strain>
    </source>
</reference>
<keyword id="KW-1185">Reference proteome</keyword>
<organism>
    <name type="scientific">Methanocaldococcus jannaschii (strain ATCC 43067 / DSM 2661 / JAL-1 / JCM 10045 / NBRC 100440)</name>
    <name type="common">Methanococcus jannaschii</name>
    <dbReference type="NCBI Taxonomy" id="243232"/>
    <lineage>
        <taxon>Archaea</taxon>
        <taxon>Methanobacteriati</taxon>
        <taxon>Methanobacteriota</taxon>
        <taxon>Methanomada group</taxon>
        <taxon>Methanococci</taxon>
        <taxon>Methanococcales</taxon>
        <taxon>Methanocaldococcaceae</taxon>
        <taxon>Methanocaldococcus</taxon>
    </lineage>
</organism>
<dbReference type="EMBL" id="L77117">
    <property type="protein sequence ID" value="AAB98350.1"/>
    <property type="molecule type" value="Genomic_DNA"/>
</dbReference>
<dbReference type="PIR" id="F64344">
    <property type="entry name" value="F64344"/>
</dbReference>
<dbReference type="RefSeq" id="WP_010869857.1">
    <property type="nucleotide sequence ID" value="NC_000909.1"/>
</dbReference>
<dbReference type="SMR" id="Q57804"/>
<dbReference type="STRING" id="243232.MJ_0358"/>
<dbReference type="PaxDb" id="243232-MJ_0358"/>
<dbReference type="EnsemblBacteria" id="AAB98350">
    <property type="protein sequence ID" value="AAB98350"/>
    <property type="gene ID" value="MJ_0358"/>
</dbReference>
<dbReference type="GeneID" id="1451215"/>
<dbReference type="KEGG" id="mja:MJ_0358"/>
<dbReference type="HOGENOM" id="CLU_1954678_0_0_2"/>
<dbReference type="InParanoid" id="Q57804"/>
<dbReference type="Proteomes" id="UP000000805">
    <property type="component" value="Chromosome"/>
</dbReference>
<proteinExistence type="predicted"/>
<name>Y358_METJA</name>
<protein>
    <recommendedName>
        <fullName>Uncharacterized protein MJ0358</fullName>
    </recommendedName>
</protein>